<proteinExistence type="inferred from homology"/>
<evidence type="ECO:0000250" key="1">
    <source>
        <dbReference type="UniProtKB" id="O53551"/>
    </source>
</evidence>
<evidence type="ECO:0000305" key="2"/>
<reference key="1">
    <citation type="journal article" date="2008" name="Genome Res.">
        <title>Insights from the complete genome sequence of Mycobacterium marinum on the evolution of Mycobacterium tuberculosis.</title>
        <authorList>
            <person name="Stinear T.P."/>
            <person name="Seemann T."/>
            <person name="Harrison P.F."/>
            <person name="Jenkin G.A."/>
            <person name="Davies J.K."/>
            <person name="Johnson P.D."/>
            <person name="Abdellah Z."/>
            <person name="Arrowsmith C."/>
            <person name="Chillingworth T."/>
            <person name="Churcher C."/>
            <person name="Clarke K."/>
            <person name="Cronin A."/>
            <person name="Davis P."/>
            <person name="Goodhead I."/>
            <person name="Holroyd N."/>
            <person name="Jagels K."/>
            <person name="Lord A."/>
            <person name="Moule S."/>
            <person name="Mungall K."/>
            <person name="Norbertczak H."/>
            <person name="Quail M.A."/>
            <person name="Rabbinowitsch E."/>
            <person name="Walker D."/>
            <person name="White B."/>
            <person name="Whitehead S."/>
            <person name="Small P.L."/>
            <person name="Brosch R."/>
            <person name="Ramakrishnan L."/>
            <person name="Fischbach M.A."/>
            <person name="Parkhill J."/>
            <person name="Cole S.T."/>
        </authorList>
    </citation>
    <scope>NUCLEOTIDE SEQUENCE [LARGE SCALE GENOMIC DNA]</scope>
    <source>
        <strain>ATCC BAA-535 / M</strain>
    </source>
</reference>
<dbReference type="EC" id="6.2.1.2" evidence="1"/>
<dbReference type="EC" id="6.2.1.3" evidence="1"/>
<dbReference type="EMBL" id="CP000854">
    <property type="protein sequence ID" value="ACC43398.1"/>
    <property type="molecule type" value="Genomic_DNA"/>
</dbReference>
<dbReference type="RefSeq" id="WP_012396518.1">
    <property type="nucleotide sequence ID" value="NC_010612.1"/>
</dbReference>
<dbReference type="SMR" id="B2HHZ8"/>
<dbReference type="STRING" id="216594.MMAR_4994"/>
<dbReference type="KEGG" id="mmi:MMAR_4994"/>
<dbReference type="eggNOG" id="COG0318">
    <property type="taxonomic scope" value="Bacteria"/>
</dbReference>
<dbReference type="HOGENOM" id="CLU_000022_59_10_11"/>
<dbReference type="OrthoDB" id="9803968at2"/>
<dbReference type="UniPathway" id="UPA00094"/>
<dbReference type="Proteomes" id="UP000001190">
    <property type="component" value="Chromosome"/>
</dbReference>
<dbReference type="GO" id="GO:0005886">
    <property type="term" value="C:plasma membrane"/>
    <property type="evidence" value="ECO:0007669"/>
    <property type="project" value="TreeGrafter"/>
</dbReference>
<dbReference type="GO" id="GO:0005524">
    <property type="term" value="F:ATP binding"/>
    <property type="evidence" value="ECO:0007669"/>
    <property type="project" value="UniProtKB-KW"/>
</dbReference>
<dbReference type="GO" id="GO:0005324">
    <property type="term" value="F:long-chain fatty acid transmembrane transporter activity"/>
    <property type="evidence" value="ECO:0007669"/>
    <property type="project" value="TreeGrafter"/>
</dbReference>
<dbReference type="GO" id="GO:0004467">
    <property type="term" value="F:long-chain fatty acid-CoA ligase activity"/>
    <property type="evidence" value="ECO:0007669"/>
    <property type="project" value="UniProtKB-EC"/>
</dbReference>
<dbReference type="GO" id="GO:0031956">
    <property type="term" value="F:medium-chain fatty acid-CoA ligase activity"/>
    <property type="evidence" value="ECO:0007669"/>
    <property type="project" value="UniProtKB-EC"/>
</dbReference>
<dbReference type="GO" id="GO:0006633">
    <property type="term" value="P:fatty acid biosynthetic process"/>
    <property type="evidence" value="ECO:0007669"/>
    <property type="project" value="UniProtKB-UniPathway"/>
</dbReference>
<dbReference type="GO" id="GO:0044539">
    <property type="term" value="P:long-chain fatty acid import into cell"/>
    <property type="evidence" value="ECO:0007669"/>
    <property type="project" value="TreeGrafter"/>
</dbReference>
<dbReference type="CDD" id="cd05934">
    <property type="entry name" value="FACL_DitJ_like"/>
    <property type="match status" value="1"/>
</dbReference>
<dbReference type="Gene3D" id="3.30.300.30">
    <property type="match status" value="1"/>
</dbReference>
<dbReference type="Gene3D" id="3.40.50.12780">
    <property type="entry name" value="N-terminal domain of ligase-like"/>
    <property type="match status" value="1"/>
</dbReference>
<dbReference type="InterPro" id="IPR025110">
    <property type="entry name" value="AMP-bd_C"/>
</dbReference>
<dbReference type="InterPro" id="IPR045851">
    <property type="entry name" value="AMP-bd_C_sf"/>
</dbReference>
<dbReference type="InterPro" id="IPR020845">
    <property type="entry name" value="AMP-binding_CS"/>
</dbReference>
<dbReference type="InterPro" id="IPR000873">
    <property type="entry name" value="AMP-dep_synth/lig_dom"/>
</dbReference>
<dbReference type="InterPro" id="IPR042099">
    <property type="entry name" value="ANL_N_sf"/>
</dbReference>
<dbReference type="NCBIfam" id="NF005897">
    <property type="entry name" value="PRK07867.1"/>
    <property type="match status" value="1"/>
</dbReference>
<dbReference type="PANTHER" id="PTHR43107:SF15">
    <property type="entry name" value="FATTY ACID TRANSPORT PROTEIN 3, ISOFORM A"/>
    <property type="match status" value="1"/>
</dbReference>
<dbReference type="PANTHER" id="PTHR43107">
    <property type="entry name" value="LONG-CHAIN FATTY ACID TRANSPORT PROTEIN"/>
    <property type="match status" value="1"/>
</dbReference>
<dbReference type="Pfam" id="PF00501">
    <property type="entry name" value="AMP-binding"/>
    <property type="match status" value="1"/>
</dbReference>
<dbReference type="Pfam" id="PF13193">
    <property type="entry name" value="AMP-binding_C"/>
    <property type="match status" value="1"/>
</dbReference>
<dbReference type="SUPFAM" id="SSF56801">
    <property type="entry name" value="Acetyl-CoA synthetase-like"/>
    <property type="match status" value="1"/>
</dbReference>
<dbReference type="PROSITE" id="PS00455">
    <property type="entry name" value="AMP_BINDING"/>
    <property type="match status" value="1"/>
</dbReference>
<keyword id="KW-0067">ATP-binding</keyword>
<keyword id="KW-0276">Fatty acid metabolism</keyword>
<keyword id="KW-0436">Ligase</keyword>
<keyword id="KW-0443">Lipid metabolism</keyword>
<keyword id="KW-0547">Nucleotide-binding</keyword>
<keyword id="KW-1185">Reference proteome</keyword>
<gene>
    <name type="primary">fadD17</name>
    <name type="ordered locus">MMAR_4994</name>
</gene>
<protein>
    <recommendedName>
        <fullName>Medium/long-chain-fatty-acid--CoA ligase FadD17</fullName>
        <shortName>FACL</shortName>
        <ecNumber evidence="1">6.2.1.2</ecNumber>
        <ecNumber evidence="1">6.2.1.3</ecNumber>
    </recommendedName>
    <alternativeName>
        <fullName>Acyl-CoA synthetase</fullName>
    </alternativeName>
</protein>
<comment type="function">
    <text evidence="1">Catalyzes the activation of medium/long-chain fatty acids as acyl-coenzyme A (acyl-CoA), which are then transferred to the multifunctional polyketide synthase (PKS) type III for further chain extension.</text>
</comment>
<comment type="catalytic activity">
    <reaction evidence="1">
        <text>a medium-chain fatty acid + ATP + CoA = a medium-chain fatty acyl-CoA + AMP + diphosphate</text>
        <dbReference type="Rhea" id="RHEA:48340"/>
        <dbReference type="ChEBI" id="CHEBI:30616"/>
        <dbReference type="ChEBI" id="CHEBI:33019"/>
        <dbReference type="ChEBI" id="CHEBI:57287"/>
        <dbReference type="ChEBI" id="CHEBI:59558"/>
        <dbReference type="ChEBI" id="CHEBI:90546"/>
        <dbReference type="ChEBI" id="CHEBI:456215"/>
        <dbReference type="EC" id="6.2.1.2"/>
    </reaction>
    <physiologicalReaction direction="left-to-right" evidence="1">
        <dbReference type="Rhea" id="RHEA:48341"/>
    </physiologicalReaction>
</comment>
<comment type="catalytic activity">
    <reaction evidence="1">
        <text>a long-chain fatty acid + ATP + CoA = a long-chain fatty acyl-CoA + AMP + diphosphate</text>
        <dbReference type="Rhea" id="RHEA:15421"/>
        <dbReference type="ChEBI" id="CHEBI:30616"/>
        <dbReference type="ChEBI" id="CHEBI:33019"/>
        <dbReference type="ChEBI" id="CHEBI:57287"/>
        <dbReference type="ChEBI" id="CHEBI:57560"/>
        <dbReference type="ChEBI" id="CHEBI:83139"/>
        <dbReference type="ChEBI" id="CHEBI:456215"/>
        <dbReference type="EC" id="6.2.1.3"/>
    </reaction>
    <physiologicalReaction direction="left-to-right" evidence="1">
        <dbReference type="Rhea" id="RHEA:15422"/>
    </physiologicalReaction>
</comment>
<comment type="pathway">
    <text evidence="1">Lipid metabolism; fatty acid biosynthesis.</text>
</comment>
<comment type="similarity">
    <text evidence="2">Belongs to the ATP-dependent AMP-binding enzyme family.</text>
</comment>
<feature type="chain" id="PRO_0000406789" description="Medium/long-chain-fatty-acid--CoA ligase FadD17">
    <location>
        <begin position="1"/>
        <end position="503"/>
    </location>
</feature>
<sequence>MSADPTVPQLLVPLAEIGDRGIYFEDSFTSWADHIGHGAAIAAALRERLDPTRPPHVGVLLQNTPFFSAMLAAAGMSGIIPVGLNPVRRGAALARDIEHADCQMVLADTASASTLDGIEHVNVDSAEWAEVIDAHRNSEISFQNAAPADLFMLIYTSGTSGDPKAVKCSHSKVAIAGVTMTQRFGLGRDDVCYVSMPLFHSNAVLVGWAVAVACQGSMALRRKFSASQFLSDVRRYGATYANYVGKPLSYVLATPERPDDADNPLRAVYGNEGVPGDSERFGCRFGCVVQDGFGSTEGGVAIARTPDTPAGSLGPLPENIEILDPETGQQCPVGAVGELVNTAGPGRFEGYYNDEAASAQRMSGGVYHSGDLAYRDAAGYAYFAGRLGDWMRVDGENLGTAPIERVLLRYPDAIEVAVYAIPDPVVGDQVMAAMVLTPGAKFDVDKFRAFLAGQSDLGPKQWPSYVRICSALPRTETFKVLKRQLAADGVDCGDPVWPIRDQS</sequence>
<organism>
    <name type="scientific">Mycobacterium marinum (strain ATCC BAA-535 / M)</name>
    <dbReference type="NCBI Taxonomy" id="216594"/>
    <lineage>
        <taxon>Bacteria</taxon>
        <taxon>Bacillati</taxon>
        <taxon>Actinomycetota</taxon>
        <taxon>Actinomycetes</taxon>
        <taxon>Mycobacteriales</taxon>
        <taxon>Mycobacteriaceae</taxon>
        <taxon>Mycobacterium</taxon>
        <taxon>Mycobacterium ulcerans group</taxon>
    </lineage>
</organism>
<name>FAC17_MYCMM</name>
<accession>B2HHZ8</accession>